<evidence type="ECO:0000255" key="1">
    <source>
        <dbReference type="HAMAP-Rule" id="MF_00127"/>
    </source>
</evidence>
<protein>
    <recommendedName>
        <fullName evidence="1">Histidine--tRNA ligase</fullName>
        <ecNumber evidence="1">6.1.1.21</ecNumber>
    </recommendedName>
    <alternativeName>
        <fullName evidence="1">Histidyl-tRNA synthetase</fullName>
        <shortName evidence="1">HisRS</shortName>
    </alternativeName>
</protein>
<organism>
    <name type="scientific">Metallosphaera sedula (strain ATCC 51363 / DSM 5348 / JCM 9185 / NBRC 15509 / TH2)</name>
    <dbReference type="NCBI Taxonomy" id="399549"/>
    <lineage>
        <taxon>Archaea</taxon>
        <taxon>Thermoproteota</taxon>
        <taxon>Thermoprotei</taxon>
        <taxon>Sulfolobales</taxon>
        <taxon>Sulfolobaceae</taxon>
        <taxon>Metallosphaera</taxon>
    </lineage>
</organism>
<comment type="catalytic activity">
    <reaction evidence="1">
        <text>tRNA(His) + L-histidine + ATP = L-histidyl-tRNA(His) + AMP + diphosphate + H(+)</text>
        <dbReference type="Rhea" id="RHEA:17313"/>
        <dbReference type="Rhea" id="RHEA-COMP:9665"/>
        <dbReference type="Rhea" id="RHEA-COMP:9689"/>
        <dbReference type="ChEBI" id="CHEBI:15378"/>
        <dbReference type="ChEBI" id="CHEBI:30616"/>
        <dbReference type="ChEBI" id="CHEBI:33019"/>
        <dbReference type="ChEBI" id="CHEBI:57595"/>
        <dbReference type="ChEBI" id="CHEBI:78442"/>
        <dbReference type="ChEBI" id="CHEBI:78527"/>
        <dbReference type="ChEBI" id="CHEBI:456215"/>
        <dbReference type="EC" id="6.1.1.21"/>
    </reaction>
</comment>
<comment type="subcellular location">
    <subcellularLocation>
        <location evidence="1">Cytoplasm</location>
    </subcellularLocation>
</comment>
<comment type="similarity">
    <text evidence="1">Belongs to the class-II aminoacyl-tRNA synthetase family.</text>
</comment>
<proteinExistence type="inferred from homology"/>
<dbReference type="EC" id="6.1.1.21" evidence="1"/>
<dbReference type="EMBL" id="CP000682">
    <property type="protein sequence ID" value="ABP96405.1"/>
    <property type="molecule type" value="Genomic_DNA"/>
</dbReference>
<dbReference type="RefSeq" id="WP_012022192.1">
    <property type="nucleotide sequence ID" value="NZ_CP139956.1"/>
</dbReference>
<dbReference type="SMR" id="A4YJ03"/>
<dbReference type="STRING" id="399549.Msed_2267"/>
<dbReference type="GeneID" id="97612629"/>
<dbReference type="KEGG" id="mse:Msed_2267"/>
<dbReference type="eggNOG" id="arCOG00404">
    <property type="taxonomic scope" value="Archaea"/>
</dbReference>
<dbReference type="HOGENOM" id="CLU_025113_3_1_2"/>
<dbReference type="Proteomes" id="UP000000242">
    <property type="component" value="Chromosome"/>
</dbReference>
<dbReference type="GO" id="GO:0005737">
    <property type="term" value="C:cytoplasm"/>
    <property type="evidence" value="ECO:0007669"/>
    <property type="project" value="UniProtKB-SubCell"/>
</dbReference>
<dbReference type="GO" id="GO:0005524">
    <property type="term" value="F:ATP binding"/>
    <property type="evidence" value="ECO:0007669"/>
    <property type="project" value="UniProtKB-UniRule"/>
</dbReference>
<dbReference type="GO" id="GO:0004821">
    <property type="term" value="F:histidine-tRNA ligase activity"/>
    <property type="evidence" value="ECO:0007669"/>
    <property type="project" value="UniProtKB-UniRule"/>
</dbReference>
<dbReference type="GO" id="GO:0006427">
    <property type="term" value="P:histidyl-tRNA aminoacylation"/>
    <property type="evidence" value="ECO:0007669"/>
    <property type="project" value="UniProtKB-UniRule"/>
</dbReference>
<dbReference type="GO" id="GO:0000105">
    <property type="term" value="P:L-histidine biosynthetic process"/>
    <property type="evidence" value="ECO:0007669"/>
    <property type="project" value="InterPro"/>
</dbReference>
<dbReference type="CDD" id="cd00773">
    <property type="entry name" value="HisRS-like_core"/>
    <property type="match status" value="1"/>
</dbReference>
<dbReference type="Gene3D" id="3.40.50.800">
    <property type="entry name" value="Anticodon-binding domain"/>
    <property type="match status" value="1"/>
</dbReference>
<dbReference type="Gene3D" id="3.30.930.10">
    <property type="entry name" value="Bira Bifunctional Protein, Domain 2"/>
    <property type="match status" value="1"/>
</dbReference>
<dbReference type="HAMAP" id="MF_00127">
    <property type="entry name" value="His_tRNA_synth"/>
    <property type="match status" value="1"/>
</dbReference>
<dbReference type="HAMAP" id="MF_00125">
    <property type="entry name" value="HisZ"/>
    <property type="match status" value="1"/>
</dbReference>
<dbReference type="InterPro" id="IPR006195">
    <property type="entry name" value="aa-tRNA-synth_II"/>
</dbReference>
<dbReference type="InterPro" id="IPR045864">
    <property type="entry name" value="aa-tRNA-synth_II/BPL/LPL"/>
</dbReference>
<dbReference type="InterPro" id="IPR004154">
    <property type="entry name" value="Anticodon-bd"/>
</dbReference>
<dbReference type="InterPro" id="IPR036621">
    <property type="entry name" value="Anticodon-bd_dom_sf"/>
</dbReference>
<dbReference type="InterPro" id="IPR015807">
    <property type="entry name" value="His-tRNA-ligase"/>
</dbReference>
<dbReference type="InterPro" id="IPR041715">
    <property type="entry name" value="HisRS-like_core"/>
</dbReference>
<dbReference type="InterPro" id="IPR004516">
    <property type="entry name" value="HisRS/HisZ"/>
</dbReference>
<dbReference type="InterPro" id="IPR004517">
    <property type="entry name" value="HisZ"/>
</dbReference>
<dbReference type="NCBIfam" id="TIGR00442">
    <property type="entry name" value="hisS"/>
    <property type="match status" value="1"/>
</dbReference>
<dbReference type="PANTHER" id="PTHR43707:SF1">
    <property type="entry name" value="HISTIDINE--TRNA LIGASE, MITOCHONDRIAL-RELATED"/>
    <property type="match status" value="1"/>
</dbReference>
<dbReference type="PANTHER" id="PTHR43707">
    <property type="entry name" value="HISTIDYL-TRNA SYNTHETASE"/>
    <property type="match status" value="1"/>
</dbReference>
<dbReference type="Pfam" id="PF03129">
    <property type="entry name" value="HGTP_anticodon"/>
    <property type="match status" value="1"/>
</dbReference>
<dbReference type="Pfam" id="PF13393">
    <property type="entry name" value="tRNA-synt_His"/>
    <property type="match status" value="1"/>
</dbReference>
<dbReference type="PIRSF" id="PIRSF001549">
    <property type="entry name" value="His-tRNA_synth"/>
    <property type="match status" value="1"/>
</dbReference>
<dbReference type="SUPFAM" id="SSF52954">
    <property type="entry name" value="Class II aaRS ABD-related"/>
    <property type="match status" value="1"/>
</dbReference>
<dbReference type="SUPFAM" id="SSF55681">
    <property type="entry name" value="Class II aaRS and biotin synthetases"/>
    <property type="match status" value="1"/>
</dbReference>
<dbReference type="PROSITE" id="PS50862">
    <property type="entry name" value="AA_TRNA_LIGASE_II"/>
    <property type="match status" value="1"/>
</dbReference>
<accession>A4YJ03</accession>
<keyword id="KW-0030">Aminoacyl-tRNA synthetase</keyword>
<keyword id="KW-0067">ATP-binding</keyword>
<keyword id="KW-0963">Cytoplasm</keyword>
<keyword id="KW-0436">Ligase</keyword>
<keyword id="KW-0547">Nucleotide-binding</keyword>
<keyword id="KW-0648">Protein biosynthesis</keyword>
<keyword id="KW-1185">Reference proteome</keyword>
<reference key="1">
    <citation type="journal article" date="2008" name="Appl. Environ. Microbiol.">
        <title>The genome sequence of the metal-mobilizing, extremely thermoacidophilic archaeon Metallosphaera sedula provides insights into bioleaching-associated metabolism.</title>
        <authorList>
            <person name="Auernik K.S."/>
            <person name="Maezato Y."/>
            <person name="Blum P.H."/>
            <person name="Kelly R.M."/>
        </authorList>
    </citation>
    <scope>NUCLEOTIDE SEQUENCE [LARGE SCALE GENOMIC DNA]</scope>
    <source>
        <strain>ATCC 51363 / DSM 5348 / JCM 9185 / NBRC 15509 / TH2</strain>
    </source>
</reference>
<gene>
    <name evidence="1" type="primary">hisS</name>
    <name type="ordered locus">Msed_2267</name>
</gene>
<feature type="chain" id="PRO_1000071405" description="Histidine--tRNA ligase">
    <location>
        <begin position="1"/>
        <end position="430"/>
    </location>
</feature>
<sequence length="430" mass="49359">MVSYEPMRGMEDYFDVDSKIIRWIESNFRETVEKAGYKEAMTPIVEDFELFSLKGGEELRNTMYVFKDKGEREVALRPEITPSIVRLYLNSLQHYPKPLRIFYIGRVYRYDEPQQGRYREFRQAGVELLGSDSILADIEVLHLLENFYRRINLKDKISLKINNIGIFRIIFNKLSFDEQVQEHLLHLLDKGKIEEAEKILDEKIRDNSKIRQFIYTLITNGRSLKLEEAMREAEKTELSELVNEIENLKLISEILSSLNLDHIVDLGFVRGLAYYTGPIFEVVKRDLPFSIAGGGRYDSLVEVYGGNRTPAVGFAIGIERTMYALNKDGIKFDSNAPLVAVVALDRSVIPHALSIVSMLRDKGFITVLNNKEIPLSKLVPLYAEQGFTHLIIMGQKEITSGKVTVRNLVKREQITTDVKELTNVITAPDK</sequence>
<name>SYH_METS5</name>